<proteinExistence type="evidence at transcript level"/>
<gene>
    <name type="primary">TMEM164</name>
</gene>
<accession>Q5EA91</accession>
<keyword id="KW-0472">Membrane</keyword>
<keyword id="KW-1185">Reference proteome</keyword>
<keyword id="KW-0812">Transmembrane</keyword>
<keyword id="KW-1133">Transmembrane helix</keyword>
<dbReference type="EMBL" id="BT020678">
    <property type="protein sequence ID" value="AAX08695.1"/>
    <property type="molecule type" value="mRNA"/>
</dbReference>
<dbReference type="RefSeq" id="NP_001026932.1">
    <property type="nucleotide sequence ID" value="NM_001031762.1"/>
</dbReference>
<dbReference type="FunCoup" id="Q5EA91">
    <property type="interactions" value="53"/>
</dbReference>
<dbReference type="STRING" id="9913.ENSBTAP00000061138"/>
<dbReference type="PaxDb" id="9913-ENSBTAP00000051070"/>
<dbReference type="GeneID" id="524183"/>
<dbReference type="KEGG" id="bta:524183"/>
<dbReference type="CTD" id="84187"/>
<dbReference type="eggNOG" id="ENOG502QWAJ">
    <property type="taxonomic scope" value="Eukaryota"/>
</dbReference>
<dbReference type="InParanoid" id="Q5EA91"/>
<dbReference type="OrthoDB" id="17328at2759"/>
<dbReference type="Proteomes" id="UP000009136">
    <property type="component" value="Unplaced"/>
</dbReference>
<dbReference type="GO" id="GO:0016020">
    <property type="term" value="C:membrane"/>
    <property type="evidence" value="ECO:0007669"/>
    <property type="project" value="UniProtKB-SubCell"/>
</dbReference>
<dbReference type="GO" id="GO:0160020">
    <property type="term" value="P:positive regulation of ferroptosis"/>
    <property type="evidence" value="ECO:0000250"/>
    <property type="project" value="UniProtKB"/>
</dbReference>
<dbReference type="InterPro" id="IPR026508">
    <property type="entry name" value="TMEM164"/>
</dbReference>
<dbReference type="PANTHER" id="PTHR20948">
    <property type="entry name" value="TRANSMEMBRANE PROTEIN 164"/>
    <property type="match status" value="1"/>
</dbReference>
<dbReference type="PANTHER" id="PTHR20948:SF2">
    <property type="entry name" value="TRANSMEMBRANE PROTEIN 164"/>
    <property type="match status" value="1"/>
</dbReference>
<dbReference type="Pfam" id="PF14808">
    <property type="entry name" value="TMEM164"/>
    <property type="match status" value="1"/>
</dbReference>
<reference key="1">
    <citation type="journal article" date="2005" name="BMC Genomics">
        <title>Characterization of 954 bovine full-CDS cDNA sequences.</title>
        <authorList>
            <person name="Harhay G.P."/>
            <person name="Sonstegard T.S."/>
            <person name="Keele J.W."/>
            <person name="Heaton M.P."/>
            <person name="Clawson M.L."/>
            <person name="Snelling W.M."/>
            <person name="Wiedmann R.T."/>
            <person name="Van Tassell C.P."/>
            <person name="Smith T.P.L."/>
        </authorList>
    </citation>
    <scope>NUCLEOTIDE SEQUENCE [LARGE SCALE MRNA]</scope>
</reference>
<protein>
    <recommendedName>
        <fullName>Transmembrane protein 164</fullName>
    </recommendedName>
    <alternativeName>
        <fullName>Arachidonoyl ether phospholipid synthase</fullName>
    </alternativeName>
</protein>
<name>TM164_BOVIN</name>
<feature type="chain" id="PRO_0000259639" description="Transmembrane protein 164">
    <location>
        <begin position="1"/>
        <end position="258"/>
    </location>
</feature>
<feature type="transmembrane region" description="Helical" evidence="2">
    <location>
        <begin position="40"/>
        <end position="60"/>
    </location>
</feature>
<feature type="transmembrane region" description="Helical" evidence="2">
    <location>
        <begin position="93"/>
        <end position="113"/>
    </location>
</feature>
<feature type="transmembrane region" description="Helical" evidence="2">
    <location>
        <begin position="133"/>
        <end position="153"/>
    </location>
</feature>
<feature type="transmembrane region" description="Helical" evidence="2">
    <location>
        <begin position="171"/>
        <end position="191"/>
    </location>
</feature>
<feature type="transmembrane region" description="Helical" evidence="2">
    <location>
        <begin position="223"/>
        <end position="243"/>
    </location>
</feature>
<feature type="region of interest" description="Disordered" evidence="3">
    <location>
        <begin position="66"/>
        <end position="86"/>
    </location>
</feature>
<organism>
    <name type="scientific">Bos taurus</name>
    <name type="common">Bovine</name>
    <dbReference type="NCBI Taxonomy" id="9913"/>
    <lineage>
        <taxon>Eukaryota</taxon>
        <taxon>Metazoa</taxon>
        <taxon>Chordata</taxon>
        <taxon>Craniata</taxon>
        <taxon>Vertebrata</taxon>
        <taxon>Euteleostomi</taxon>
        <taxon>Mammalia</taxon>
        <taxon>Eutheria</taxon>
        <taxon>Laurasiatheria</taxon>
        <taxon>Artiodactyla</taxon>
        <taxon>Ruminantia</taxon>
        <taxon>Pecora</taxon>
        <taxon>Bovidae</taxon>
        <taxon>Bovinae</taxon>
        <taxon>Bos</taxon>
    </lineage>
</organism>
<sequence>MSRYSYQSLLDWLYGGVDPSFAGNGGPDCAAFLSWQQRLLESVVVLTLALLEILVALRHILRQTKEDGRGGRGCQPEQVTQRPEEGKESLSKNLLLVALCLTFGVEVGFKFATKTVIYLLNPCHLVTMMHLPFELEIYYIQHVMLYVVPIYLLWKGGAYTPEPLSSFRWALPSTGLMFFYHFSILQILGLVTEVNLNNMLCPAISDPFYGPWYRIWASGHQTLMTMTHGKLVILFSYMAGPLCKYLLDLLRLPAKKID</sequence>
<evidence type="ECO:0000250" key="1">
    <source>
        <dbReference type="UniProtKB" id="Q5U3C3"/>
    </source>
</evidence>
<evidence type="ECO:0000255" key="2"/>
<evidence type="ECO:0000256" key="3">
    <source>
        <dbReference type="SAM" id="MobiDB-lite"/>
    </source>
</evidence>
<evidence type="ECO:0000305" key="4"/>
<comment type="function">
    <text evidence="1">Positive regulator of ferroptosis. Involved in the acylation of ether lysophospholipids with the arachidonoyl chain (5Z,8Z,11Z,14Z-eicosatetraenoyl; C20:4) of diacylglycerophospholipids, generating C20:4 ether glycerophospholipids (ePEs) such as 1-(1Z-octadecenyl)-2-(5Z,8Z,11Z,14Z-eicosatetraenoyl)-sn-glycero-3-phosphoethanolamine (PE (P-18:0/20:4)), which promotes ferroptosis. Selectively mediates ATG5-dependent autophagosome formation during ferroptosis, rather than during starvation, and regulates the degradation of ferritin, GPX4 and lipid droplets to increase iron accumulation and lipid peroxidation, thereby promoting ferroptotic cell death.</text>
</comment>
<comment type="catalytic activity">
    <reaction evidence="1">
        <text>1-(1Z-octadecenyl)-sn-glycero-3-phosphoethanolamine + 1-octadecanoyl-2-(5Z,8Z,11Z,14Z-eicosatetraenoyl)-sn-glycero-3-phosphocholine = 1-(1Z-octadecenyl)-2-(5Z,8Z,11Z,14Z- eicosatetraenoyl)-sn-glycero-3-phosphoethanolamine + 1-octadecanoyl-sn-glycero-3-phosphocholine</text>
        <dbReference type="Rhea" id="RHEA:79431"/>
        <dbReference type="ChEBI" id="CHEBI:73858"/>
        <dbReference type="ChEBI" id="CHEBI:74965"/>
        <dbReference type="ChEBI" id="CHEBI:78342"/>
        <dbReference type="ChEBI" id="CHEBI:229972"/>
    </reaction>
    <physiologicalReaction direction="left-to-right" evidence="1">
        <dbReference type="Rhea" id="RHEA:79432"/>
    </physiologicalReaction>
</comment>
<comment type="subcellular location">
    <subcellularLocation>
        <location evidence="4">Membrane</location>
        <topology evidence="4">Multi-pass membrane protein</topology>
    </subcellularLocation>
</comment>
<comment type="similarity">
    <text evidence="4">Belongs to the TMEM164 family.</text>
</comment>